<reference key="1">
    <citation type="journal article" date="2005" name="Nature">
        <title>Genome sequencing and analysis of Aspergillus oryzae.</title>
        <authorList>
            <person name="Machida M."/>
            <person name="Asai K."/>
            <person name="Sano M."/>
            <person name="Tanaka T."/>
            <person name="Kumagai T."/>
            <person name="Terai G."/>
            <person name="Kusumoto K."/>
            <person name="Arima T."/>
            <person name="Akita O."/>
            <person name="Kashiwagi Y."/>
            <person name="Abe K."/>
            <person name="Gomi K."/>
            <person name="Horiuchi H."/>
            <person name="Kitamoto K."/>
            <person name="Kobayashi T."/>
            <person name="Takeuchi M."/>
            <person name="Denning D.W."/>
            <person name="Galagan J.E."/>
            <person name="Nierman W.C."/>
            <person name="Yu J."/>
            <person name="Archer D.B."/>
            <person name="Bennett J.W."/>
            <person name="Bhatnagar D."/>
            <person name="Cleveland T.E."/>
            <person name="Fedorova N.D."/>
            <person name="Gotoh O."/>
            <person name="Horikawa H."/>
            <person name="Hosoyama A."/>
            <person name="Ichinomiya M."/>
            <person name="Igarashi R."/>
            <person name="Iwashita K."/>
            <person name="Juvvadi P.R."/>
            <person name="Kato M."/>
            <person name="Kato Y."/>
            <person name="Kin T."/>
            <person name="Kokubun A."/>
            <person name="Maeda H."/>
            <person name="Maeyama N."/>
            <person name="Maruyama J."/>
            <person name="Nagasaki H."/>
            <person name="Nakajima T."/>
            <person name="Oda K."/>
            <person name="Okada K."/>
            <person name="Paulsen I."/>
            <person name="Sakamoto K."/>
            <person name="Sawano T."/>
            <person name="Takahashi M."/>
            <person name="Takase K."/>
            <person name="Terabayashi Y."/>
            <person name="Wortman J.R."/>
            <person name="Yamada O."/>
            <person name="Yamagata Y."/>
            <person name="Anazawa H."/>
            <person name="Hata Y."/>
            <person name="Koide Y."/>
            <person name="Komori T."/>
            <person name="Koyama Y."/>
            <person name="Minetoki T."/>
            <person name="Suharnan S."/>
            <person name="Tanaka A."/>
            <person name="Isono K."/>
            <person name="Kuhara S."/>
            <person name="Ogasawara N."/>
            <person name="Kikuchi H."/>
        </authorList>
    </citation>
    <scope>NUCLEOTIDE SEQUENCE [LARGE SCALE GENOMIC DNA]</scope>
    <source>
        <strain>ATCC 42149 / RIB 40</strain>
    </source>
</reference>
<organism>
    <name type="scientific">Aspergillus oryzae (strain ATCC 42149 / RIB 40)</name>
    <name type="common">Yellow koji mold</name>
    <dbReference type="NCBI Taxonomy" id="510516"/>
    <lineage>
        <taxon>Eukaryota</taxon>
        <taxon>Fungi</taxon>
        <taxon>Dikarya</taxon>
        <taxon>Ascomycota</taxon>
        <taxon>Pezizomycotina</taxon>
        <taxon>Eurotiomycetes</taxon>
        <taxon>Eurotiomycetidae</taxon>
        <taxon>Eurotiales</taxon>
        <taxon>Aspergillaceae</taxon>
        <taxon>Aspergillus</taxon>
        <taxon>Aspergillus subgen. Circumdati</taxon>
    </lineage>
</organism>
<keyword id="KW-0846">Cobalamin</keyword>
<keyword id="KW-0170">Cobalt</keyword>
<keyword id="KW-0458">Lysosome</keyword>
<keyword id="KW-0472">Membrane</keyword>
<keyword id="KW-1185">Reference proteome</keyword>
<keyword id="KW-0812">Transmembrane</keyword>
<keyword id="KW-1133">Transmembrane helix</keyword>
<keyword id="KW-0813">Transport</keyword>
<proteinExistence type="inferred from homology"/>
<gene>
    <name type="ORF">AO090103000016</name>
</gene>
<feature type="chain" id="PRO_0000365826" description="Probable lysosomal cobalamin transporter">
    <location>
        <begin position="1"/>
        <end position="583"/>
    </location>
</feature>
<feature type="transmembrane region" description="Helical" evidence="2">
    <location>
        <begin position="8"/>
        <end position="28"/>
    </location>
</feature>
<feature type="transmembrane region" description="Helical" evidence="2">
    <location>
        <begin position="41"/>
        <end position="61"/>
    </location>
</feature>
<feature type="transmembrane region" description="Helical" evidence="2">
    <location>
        <begin position="95"/>
        <end position="115"/>
    </location>
</feature>
<feature type="transmembrane region" description="Helical" evidence="2">
    <location>
        <begin position="145"/>
        <end position="165"/>
    </location>
</feature>
<feature type="transmembrane region" description="Helical" evidence="2">
    <location>
        <begin position="188"/>
        <end position="208"/>
    </location>
</feature>
<feature type="transmembrane region" description="Helical" evidence="2">
    <location>
        <begin position="312"/>
        <end position="332"/>
    </location>
</feature>
<feature type="transmembrane region" description="Helical" evidence="2">
    <location>
        <begin position="347"/>
        <end position="367"/>
    </location>
</feature>
<feature type="transmembrane region" description="Helical" evidence="2">
    <location>
        <begin position="375"/>
        <end position="395"/>
    </location>
</feature>
<feature type="transmembrane region" description="Helical" evidence="2">
    <location>
        <begin position="418"/>
        <end position="438"/>
    </location>
</feature>
<feature type="transmembrane region" description="Helical" evidence="2">
    <location>
        <begin position="506"/>
        <end position="526"/>
    </location>
</feature>
<feature type="region of interest" description="Disordered" evidence="3">
    <location>
        <begin position="541"/>
        <end position="562"/>
    </location>
</feature>
<feature type="compositionally biased region" description="Acidic residues" evidence="3">
    <location>
        <begin position="541"/>
        <end position="552"/>
    </location>
</feature>
<dbReference type="EMBL" id="BA000056">
    <property type="protein sequence ID" value="BAE65503.1"/>
    <property type="molecule type" value="Genomic_DNA"/>
</dbReference>
<dbReference type="RefSeq" id="XP_001826636.1">
    <property type="nucleotide sequence ID" value="XM_001826584.3"/>
</dbReference>
<dbReference type="STRING" id="510516.Q2TZ20"/>
<dbReference type="EnsemblFungi" id="BAE65503">
    <property type="protein sequence ID" value="BAE65503"/>
    <property type="gene ID" value="AO090103000016"/>
</dbReference>
<dbReference type="GeneID" id="5998758"/>
<dbReference type="KEGG" id="aor:AO090103000016"/>
<dbReference type="VEuPathDB" id="FungiDB:AO090103000016"/>
<dbReference type="HOGENOM" id="CLU_028341_1_0_1"/>
<dbReference type="OMA" id="FWAQFVF"/>
<dbReference type="OrthoDB" id="112972at5052"/>
<dbReference type="Proteomes" id="UP000006564">
    <property type="component" value="Chromosome 8"/>
</dbReference>
<dbReference type="GO" id="GO:0005774">
    <property type="term" value="C:vacuolar membrane"/>
    <property type="evidence" value="ECO:0007669"/>
    <property type="project" value="TreeGrafter"/>
</dbReference>
<dbReference type="GO" id="GO:0031419">
    <property type="term" value="F:cobalamin binding"/>
    <property type="evidence" value="ECO:0007669"/>
    <property type="project" value="UniProtKB-KW"/>
</dbReference>
<dbReference type="GO" id="GO:0072665">
    <property type="term" value="P:protein localization to vacuole"/>
    <property type="evidence" value="ECO:0007669"/>
    <property type="project" value="TreeGrafter"/>
</dbReference>
<dbReference type="InterPro" id="IPR050854">
    <property type="entry name" value="LMBD1_LysCbl_Transport"/>
</dbReference>
<dbReference type="InterPro" id="IPR006876">
    <property type="entry name" value="LMBR1-like_membr_prot"/>
</dbReference>
<dbReference type="PANTHER" id="PTHR16130:SF2">
    <property type="entry name" value="LYSOSOMAL COBALAMIN TRANSPORT ESCORT PROTEIN LMBD1"/>
    <property type="match status" value="1"/>
</dbReference>
<dbReference type="PANTHER" id="PTHR16130">
    <property type="entry name" value="LYSOSOMAL COBALAMIN TRANSPORTER-RELATED"/>
    <property type="match status" value="1"/>
</dbReference>
<dbReference type="Pfam" id="PF04791">
    <property type="entry name" value="LMBR1"/>
    <property type="match status" value="1"/>
</dbReference>
<accession>Q2TZ20</accession>
<evidence type="ECO:0000250" key="1"/>
<evidence type="ECO:0000255" key="2"/>
<evidence type="ECO:0000256" key="3">
    <source>
        <dbReference type="SAM" id="MobiDB-lite"/>
    </source>
</evidence>
<evidence type="ECO:0000305" key="4"/>
<protein>
    <recommendedName>
        <fullName>Probable lysosomal cobalamin transporter</fullName>
    </recommendedName>
</protein>
<name>LMBD1_ASPOR</name>
<sequence length="583" mass="65759">MALLQTSLIWAVYAIVVAILAAVASVFIYTYQTPRDRCPSVILTCIVAVTTLLATVLLVPVDVALVSSTINPALGRRQDWATQSEVDRILLCLKIVYYFLYSLDALLCLIVIPFIYFLYEEYDEVASETEQQSFGQRFWAAFKYTVSFLAIVVVLFLVGFFVPVAKDGDGGGLDYFKHLLTENRGERALTFALGLLITIGLCLYVLYTSTGLALFPITLIKEGPSVISPTLKATTAVQLCSNRERQRQLEGRCRGNPGLLSSKDRRELDTLVREERTLIRRQRLADEAHGKHQNWLMQLWLKFGAIFRPFQLLSGVIFSLLALIIWISMLLTTIDKAKNSFCKQRCGYILGHINVFNPINWVFVQSAKIFPVDYVIFTLLVLFLFSSSIVGISAVGIRFLWIRIFQIRKGHTSPQALLLATAMLMLIILALNYSTSMILAPQYATYGPQTFCDRELSFSEKQPDCSRDKHLIRPCSEVADSLAAKQVCTPSVVSTFLNRVTMNFPFFGAIFFWAQFAFLGIYLLVMVTALLHSPKLDERQLDEDAEEAEEESLLANTRGRAETTWEDITSRLRRQNEVDRAGA</sequence>
<comment type="function">
    <text evidence="1">Probable lysosomal cobalamin transporter. Required to export cobalamin from lysosomes allowing its conversion to cofactors (By similarity).</text>
</comment>
<comment type="subcellular location">
    <subcellularLocation>
        <location evidence="1">Lysosome membrane</location>
        <topology evidence="1">Multi-pass membrane protein</topology>
    </subcellularLocation>
</comment>
<comment type="similarity">
    <text evidence="4">Belongs to the LIMR family. LMBRD1 subfamily.</text>
</comment>